<accession>B0S155</accession>
<gene>
    <name evidence="1" type="primary">coaD</name>
    <name type="ordered locus">FMG_0677</name>
</gene>
<keyword id="KW-0067">ATP-binding</keyword>
<keyword id="KW-0173">Coenzyme A biosynthesis</keyword>
<keyword id="KW-0963">Cytoplasm</keyword>
<keyword id="KW-0460">Magnesium</keyword>
<keyword id="KW-0547">Nucleotide-binding</keyword>
<keyword id="KW-0548">Nucleotidyltransferase</keyword>
<keyword id="KW-1185">Reference proteome</keyword>
<keyword id="KW-0808">Transferase</keyword>
<protein>
    <recommendedName>
        <fullName evidence="1">Phosphopantetheine adenylyltransferase</fullName>
        <ecNumber evidence="1">2.7.7.3</ecNumber>
    </recommendedName>
    <alternativeName>
        <fullName evidence="1">Dephospho-CoA pyrophosphorylase</fullName>
    </alternativeName>
    <alternativeName>
        <fullName evidence="1">Pantetheine-phosphate adenylyltransferase</fullName>
        <shortName evidence="1">PPAT</shortName>
    </alternativeName>
</protein>
<evidence type="ECO:0000255" key="1">
    <source>
        <dbReference type="HAMAP-Rule" id="MF_00151"/>
    </source>
</evidence>
<feature type="chain" id="PRO_1000096794" description="Phosphopantetheine adenylyltransferase">
    <location>
        <begin position="1"/>
        <end position="162"/>
    </location>
</feature>
<feature type="binding site" evidence="1">
    <location>
        <begin position="11"/>
        <end position="12"/>
    </location>
    <ligand>
        <name>ATP</name>
        <dbReference type="ChEBI" id="CHEBI:30616"/>
    </ligand>
</feature>
<feature type="binding site" evidence="1">
    <location>
        <position position="11"/>
    </location>
    <ligand>
        <name>substrate</name>
    </ligand>
</feature>
<feature type="binding site" evidence="1">
    <location>
        <position position="19"/>
    </location>
    <ligand>
        <name>ATP</name>
        <dbReference type="ChEBI" id="CHEBI:30616"/>
    </ligand>
</feature>
<feature type="binding site" evidence="1">
    <location>
        <position position="43"/>
    </location>
    <ligand>
        <name>substrate</name>
    </ligand>
</feature>
<feature type="binding site" evidence="1">
    <location>
        <position position="75"/>
    </location>
    <ligand>
        <name>substrate</name>
    </ligand>
</feature>
<feature type="binding site" evidence="1">
    <location>
        <position position="89"/>
    </location>
    <ligand>
        <name>substrate</name>
    </ligand>
</feature>
<feature type="binding site" evidence="1">
    <location>
        <begin position="90"/>
        <end position="92"/>
    </location>
    <ligand>
        <name>ATP</name>
        <dbReference type="ChEBI" id="CHEBI:30616"/>
    </ligand>
</feature>
<feature type="binding site" evidence="1">
    <location>
        <position position="100"/>
    </location>
    <ligand>
        <name>ATP</name>
        <dbReference type="ChEBI" id="CHEBI:30616"/>
    </ligand>
</feature>
<feature type="binding site" evidence="1">
    <location>
        <begin position="125"/>
        <end position="131"/>
    </location>
    <ligand>
        <name>ATP</name>
        <dbReference type="ChEBI" id="CHEBI:30616"/>
    </ligand>
</feature>
<feature type="site" description="Transition state stabilizer" evidence="1">
    <location>
        <position position="19"/>
    </location>
</feature>
<dbReference type="EC" id="2.7.7.3" evidence="1"/>
<dbReference type="EMBL" id="AP008971">
    <property type="protein sequence ID" value="BAG08095.1"/>
    <property type="molecule type" value="Genomic_DNA"/>
</dbReference>
<dbReference type="RefSeq" id="WP_002841696.1">
    <property type="nucleotide sequence ID" value="NC_010376.1"/>
</dbReference>
<dbReference type="SMR" id="B0S155"/>
<dbReference type="STRING" id="334413.FMG_0677"/>
<dbReference type="KEGG" id="fma:FMG_0677"/>
<dbReference type="eggNOG" id="COG0669">
    <property type="taxonomic scope" value="Bacteria"/>
</dbReference>
<dbReference type="HOGENOM" id="CLU_100149_0_1_9"/>
<dbReference type="UniPathway" id="UPA00241">
    <property type="reaction ID" value="UER00355"/>
</dbReference>
<dbReference type="Proteomes" id="UP000001319">
    <property type="component" value="Chromosome"/>
</dbReference>
<dbReference type="GO" id="GO:0005737">
    <property type="term" value="C:cytoplasm"/>
    <property type="evidence" value="ECO:0007669"/>
    <property type="project" value="UniProtKB-SubCell"/>
</dbReference>
<dbReference type="GO" id="GO:0005524">
    <property type="term" value="F:ATP binding"/>
    <property type="evidence" value="ECO:0007669"/>
    <property type="project" value="UniProtKB-KW"/>
</dbReference>
<dbReference type="GO" id="GO:0004595">
    <property type="term" value="F:pantetheine-phosphate adenylyltransferase activity"/>
    <property type="evidence" value="ECO:0007669"/>
    <property type="project" value="UniProtKB-UniRule"/>
</dbReference>
<dbReference type="GO" id="GO:0015937">
    <property type="term" value="P:coenzyme A biosynthetic process"/>
    <property type="evidence" value="ECO:0007669"/>
    <property type="project" value="UniProtKB-UniRule"/>
</dbReference>
<dbReference type="CDD" id="cd02163">
    <property type="entry name" value="PPAT"/>
    <property type="match status" value="1"/>
</dbReference>
<dbReference type="Gene3D" id="3.40.50.620">
    <property type="entry name" value="HUPs"/>
    <property type="match status" value="1"/>
</dbReference>
<dbReference type="HAMAP" id="MF_00151">
    <property type="entry name" value="PPAT_bact"/>
    <property type="match status" value="1"/>
</dbReference>
<dbReference type="InterPro" id="IPR004821">
    <property type="entry name" value="Cyt_trans-like"/>
</dbReference>
<dbReference type="InterPro" id="IPR001980">
    <property type="entry name" value="PPAT"/>
</dbReference>
<dbReference type="InterPro" id="IPR014729">
    <property type="entry name" value="Rossmann-like_a/b/a_fold"/>
</dbReference>
<dbReference type="NCBIfam" id="TIGR01510">
    <property type="entry name" value="coaD_prev_kdtB"/>
    <property type="match status" value="1"/>
</dbReference>
<dbReference type="NCBIfam" id="TIGR00125">
    <property type="entry name" value="cyt_tran_rel"/>
    <property type="match status" value="1"/>
</dbReference>
<dbReference type="PANTHER" id="PTHR21342">
    <property type="entry name" value="PHOSPHOPANTETHEINE ADENYLYLTRANSFERASE"/>
    <property type="match status" value="1"/>
</dbReference>
<dbReference type="PANTHER" id="PTHR21342:SF1">
    <property type="entry name" value="PHOSPHOPANTETHEINE ADENYLYLTRANSFERASE"/>
    <property type="match status" value="1"/>
</dbReference>
<dbReference type="Pfam" id="PF01467">
    <property type="entry name" value="CTP_transf_like"/>
    <property type="match status" value="1"/>
</dbReference>
<dbReference type="PRINTS" id="PR01020">
    <property type="entry name" value="LPSBIOSNTHSS"/>
</dbReference>
<dbReference type="SUPFAM" id="SSF52374">
    <property type="entry name" value="Nucleotidylyl transferase"/>
    <property type="match status" value="1"/>
</dbReference>
<organism>
    <name type="scientific">Finegoldia magna (strain ATCC 29328 / DSM 20472 / WAL 2508)</name>
    <name type="common">Peptostreptococcus magnus</name>
    <dbReference type="NCBI Taxonomy" id="334413"/>
    <lineage>
        <taxon>Bacteria</taxon>
        <taxon>Bacillati</taxon>
        <taxon>Bacillota</taxon>
        <taxon>Tissierellia</taxon>
        <taxon>Tissierellales</taxon>
        <taxon>Peptoniphilaceae</taxon>
        <taxon>Finegoldia</taxon>
    </lineage>
</organism>
<reference key="1">
    <citation type="journal article" date="2008" name="DNA Res.">
        <title>Complete genome sequence of Finegoldia magna, an anaerobic opportunistic pathogen.</title>
        <authorList>
            <person name="Goto T."/>
            <person name="Yamashita A."/>
            <person name="Hirakawa H."/>
            <person name="Matsutani M."/>
            <person name="Todo K."/>
            <person name="Ohshima K."/>
            <person name="Toh H."/>
            <person name="Miyamoto K."/>
            <person name="Kuhara S."/>
            <person name="Hattori M."/>
            <person name="Shimizu T."/>
            <person name="Akimoto S."/>
        </authorList>
    </citation>
    <scope>NUCLEOTIDE SEQUENCE [LARGE SCALE GENOMIC DNA]</scope>
    <source>
        <strain>ATCC 29328 / DSM 20472 / WAL 2508</strain>
    </source>
</reference>
<comment type="function">
    <text evidence="1">Reversibly transfers an adenylyl group from ATP to 4'-phosphopantetheine, yielding dephospho-CoA (dPCoA) and pyrophosphate.</text>
</comment>
<comment type="catalytic activity">
    <reaction evidence="1">
        <text>(R)-4'-phosphopantetheine + ATP + H(+) = 3'-dephospho-CoA + diphosphate</text>
        <dbReference type="Rhea" id="RHEA:19801"/>
        <dbReference type="ChEBI" id="CHEBI:15378"/>
        <dbReference type="ChEBI" id="CHEBI:30616"/>
        <dbReference type="ChEBI" id="CHEBI:33019"/>
        <dbReference type="ChEBI" id="CHEBI:57328"/>
        <dbReference type="ChEBI" id="CHEBI:61723"/>
        <dbReference type="EC" id="2.7.7.3"/>
    </reaction>
</comment>
<comment type="cofactor">
    <cofactor evidence="1">
        <name>Mg(2+)</name>
        <dbReference type="ChEBI" id="CHEBI:18420"/>
    </cofactor>
</comment>
<comment type="pathway">
    <text evidence="1">Cofactor biosynthesis; coenzyme A biosynthesis; CoA from (R)-pantothenate: step 4/5.</text>
</comment>
<comment type="subunit">
    <text evidence="1">Homohexamer.</text>
</comment>
<comment type="subcellular location">
    <subcellularLocation>
        <location evidence="1">Cytoplasm</location>
    </subcellularLocation>
</comment>
<comment type="similarity">
    <text evidence="1">Belongs to the bacterial CoaD family.</text>
</comment>
<sequence length="162" mass="18319">MNKTKVLYPGSFDPITNGHMDIIERSAKIFEEVNVAVVKNIQKKSTFTLEQRVEMIEKACKHLSNVKIHQFEGLTVDFAKQIGCSTIIRGLRAVSDFESEMQMSLANKKLNDELETLFLVADGKYAFLSSSIVREIASYGADISELVPENIVEDIKQRFNDK</sequence>
<proteinExistence type="inferred from homology"/>
<name>COAD_FINM2</name>